<organism>
    <name type="scientific">Cormocephalus westwoodi</name>
    <name type="common">Westwood's green centipede</name>
    <dbReference type="NCBI Taxonomy" id="1096223"/>
    <lineage>
        <taxon>Eukaryota</taxon>
        <taxon>Metazoa</taxon>
        <taxon>Ecdysozoa</taxon>
        <taxon>Arthropoda</taxon>
        <taxon>Myriapoda</taxon>
        <taxon>Chilopoda</taxon>
        <taxon>Pleurostigmophora</taxon>
        <taxon>Scolopendromorpha</taxon>
        <taxon>Scolopendridae</taxon>
        <taxon>Cormocephalus</taxon>
    </lineage>
</organism>
<sequence length="76" mass="8751">MAYIFALIFAFVVCINTDVIQAEEIQHDTLRNMEYRLSCTPKNSECERMTDICCPGFQCLGCNPYDKNDVNKCKCQ</sequence>
<reference key="1">
    <citation type="journal article" date="2014" name="Mol. Biol. Evol.">
        <title>Clawing through evolution: toxin diversification and convergence in the ancient lineage Chilopoda (centipedes).</title>
        <authorList>
            <person name="Undheim E.A."/>
            <person name="Jones A."/>
            <person name="Clauser K.R."/>
            <person name="Holland J.W."/>
            <person name="Pineda S.S."/>
            <person name="King G.F."/>
            <person name="Fry B.G."/>
        </authorList>
    </citation>
    <scope>NUCLEOTIDE SEQUENCE [MRNA]</scope>
    <scope>NOMENCLATURE</scope>
    <source>
        <tissue>Venom gland</tissue>
    </source>
</reference>
<accession>P0DQB2</accession>
<name>TXD1A_CORWE</name>
<evidence type="ECO:0000255" key="1"/>
<evidence type="ECO:0000303" key="2">
    <source>
    </source>
</evidence>
<evidence type="ECO:0000305" key="3"/>
<evidence type="ECO:0000305" key="4">
    <source>
    </source>
</evidence>
<keyword id="KW-1015">Disulfide bond</keyword>
<keyword id="KW-0964">Secreted</keyword>
<keyword id="KW-0732">Signal</keyword>
<keyword id="KW-0800">Toxin</keyword>
<comment type="subcellular location">
    <subcellularLocation>
        <location evidence="4">Secreted</location>
    </subcellularLocation>
</comment>
<comment type="tissue specificity">
    <text evidence="4">Expressed by the venom gland.</text>
</comment>
<comment type="PTM">
    <text evidence="3">Contains 4 disulfide bonds.</text>
</comment>
<comment type="similarity">
    <text evidence="3">Belongs to the scoloptoxin-13 family.</text>
</comment>
<comment type="caution">
    <text evidence="4">All C.westwoodi family members described in 'Undeheim et al., 2014' have not been imported into UniProtKB. Please, refer to this paper to access them.</text>
</comment>
<comment type="online information" name="National Center for Biotechnology Information (NCBI)">
    <link uri="https://www.ncbi.nlm.nih.gov/nuccore/GASL01000042"/>
</comment>
<dbReference type="SMR" id="P0DQB2"/>
<dbReference type="GO" id="GO:0005576">
    <property type="term" value="C:extracellular region"/>
    <property type="evidence" value="ECO:0007669"/>
    <property type="project" value="UniProtKB-SubCell"/>
</dbReference>
<dbReference type="GO" id="GO:0090729">
    <property type="term" value="F:toxin activity"/>
    <property type="evidence" value="ECO:0007669"/>
    <property type="project" value="UniProtKB-KW"/>
</dbReference>
<proteinExistence type="inferred from homology"/>
<protein>
    <recommendedName>
        <fullName evidence="2">U-scoloptoxin(13)-Cw1a</fullName>
        <shortName evidence="2">U-SLPTX(13)-Cw1a</shortName>
    </recommendedName>
</protein>
<feature type="signal peptide" evidence="1">
    <location>
        <begin position="1"/>
        <end position="22"/>
    </location>
</feature>
<feature type="chain" id="PRO_0000446781" description="U-scoloptoxin(13)-Cw1a" evidence="3">
    <location>
        <begin position="23"/>
        <end position="76"/>
    </location>
</feature>